<gene>
    <name type="primary">ybdI</name>
    <name type="ordered locus">LL0134</name>
    <name type="ORF">L135900</name>
</gene>
<reference key="1">
    <citation type="journal article" date="2001" name="Genome Res.">
        <title>The complete genome sequence of the lactic acid bacterium Lactococcus lactis ssp. lactis IL1403.</title>
        <authorList>
            <person name="Bolotin A."/>
            <person name="Wincker P."/>
            <person name="Mauger S."/>
            <person name="Jaillon O."/>
            <person name="Malarme K."/>
            <person name="Weissenbach J."/>
            <person name="Ehrlich S.D."/>
            <person name="Sorokin A."/>
        </authorList>
    </citation>
    <scope>NUCLEOTIDE SEQUENCE [LARGE SCALE GENOMIC DNA]</scope>
    <source>
        <strain>IL1403</strain>
    </source>
</reference>
<keyword id="KW-1003">Cell membrane</keyword>
<keyword id="KW-0472">Membrane</keyword>
<keyword id="KW-1185">Reference proteome</keyword>
<keyword id="KW-0812">Transmembrane</keyword>
<keyword id="KW-1133">Transmembrane helix</keyword>
<organism>
    <name type="scientific">Lactococcus lactis subsp. lactis (strain IL1403)</name>
    <name type="common">Streptococcus lactis</name>
    <dbReference type="NCBI Taxonomy" id="272623"/>
    <lineage>
        <taxon>Bacteria</taxon>
        <taxon>Bacillati</taxon>
        <taxon>Bacillota</taxon>
        <taxon>Bacilli</taxon>
        <taxon>Lactobacillales</taxon>
        <taxon>Streptococcaceae</taxon>
        <taxon>Lactococcus</taxon>
    </lineage>
</organism>
<name>YBDI_LACLA</name>
<sequence>MEAVHDFYPILFLVILFIVLYIAIKTGVFAHFKETFRLQNLLWLLGFVIVGYILGNIAHYLYLRFVPALDTIVENEATNNFVDSFLPTWFVYILMVVIAPIYEELMFREYFYRFFSHKWLAYILSILLFTLIHTRLTWSFFEYLPMSVIVTSTFHRYKRVSDSIIVHGGYNLMVLIFHIII</sequence>
<proteinExistence type="inferred from homology"/>
<protein>
    <recommendedName>
        <fullName>UPF0177 protein YbdI</fullName>
    </recommendedName>
</protein>
<dbReference type="EMBL" id="AE005176">
    <property type="protein sequence ID" value="AAK04232.1"/>
    <property type="molecule type" value="Genomic_DNA"/>
</dbReference>
<dbReference type="PIR" id="F86641">
    <property type="entry name" value="F86641"/>
</dbReference>
<dbReference type="RefSeq" id="NP_266290.1">
    <property type="nucleotide sequence ID" value="NC_002662.1"/>
</dbReference>
<dbReference type="RefSeq" id="WP_010905144.1">
    <property type="nucleotide sequence ID" value="NC_002662.1"/>
</dbReference>
<dbReference type="SMR" id="Q9CJ67"/>
<dbReference type="PaxDb" id="272623-L135900"/>
<dbReference type="EnsemblBacteria" id="AAK04232">
    <property type="protein sequence ID" value="AAK04232"/>
    <property type="gene ID" value="L135900"/>
</dbReference>
<dbReference type="KEGG" id="lla:L135900"/>
<dbReference type="PATRIC" id="fig|272623.7.peg.149"/>
<dbReference type="eggNOG" id="COG1266">
    <property type="taxonomic scope" value="Bacteria"/>
</dbReference>
<dbReference type="HOGENOM" id="CLU_1281856_0_0_9"/>
<dbReference type="OrthoDB" id="8607342at2"/>
<dbReference type="Proteomes" id="UP000002196">
    <property type="component" value="Chromosome"/>
</dbReference>
<dbReference type="GO" id="GO:0005886">
    <property type="term" value="C:plasma membrane"/>
    <property type="evidence" value="ECO:0007669"/>
    <property type="project" value="UniProtKB-SubCell"/>
</dbReference>
<dbReference type="GO" id="GO:0004175">
    <property type="term" value="F:endopeptidase activity"/>
    <property type="evidence" value="ECO:0007669"/>
    <property type="project" value="UniProtKB-ARBA"/>
</dbReference>
<dbReference type="GO" id="GO:0080120">
    <property type="term" value="P:CAAX-box protein maturation"/>
    <property type="evidence" value="ECO:0007669"/>
    <property type="project" value="UniProtKB-ARBA"/>
</dbReference>
<dbReference type="InterPro" id="IPR052710">
    <property type="entry name" value="CAAX_protease"/>
</dbReference>
<dbReference type="InterPro" id="IPR003675">
    <property type="entry name" value="Rce1/LyrA-like_dom"/>
</dbReference>
<dbReference type="PANTHER" id="PTHR36435:SF1">
    <property type="entry name" value="CAAX AMINO TERMINAL PROTEASE FAMILY PROTEIN"/>
    <property type="match status" value="1"/>
</dbReference>
<dbReference type="PANTHER" id="PTHR36435">
    <property type="entry name" value="SLR1288 PROTEIN"/>
    <property type="match status" value="1"/>
</dbReference>
<dbReference type="Pfam" id="PF02517">
    <property type="entry name" value="Rce1-like"/>
    <property type="match status" value="1"/>
</dbReference>
<comment type="subcellular location">
    <subcellularLocation>
        <location evidence="2">Cell membrane</location>
        <topology evidence="2">Multi-pass membrane protein</topology>
    </subcellularLocation>
</comment>
<comment type="similarity">
    <text evidence="2">Belongs to the UPF0177 family.</text>
</comment>
<accession>Q9CJ67</accession>
<feature type="chain" id="PRO_0000220578" description="UPF0177 protein YbdI">
    <location>
        <begin position="1"/>
        <end position="181"/>
    </location>
</feature>
<feature type="transmembrane region" description="Helical" evidence="1">
    <location>
        <begin position="10"/>
        <end position="30"/>
    </location>
</feature>
<feature type="transmembrane region" description="Helical" evidence="1">
    <location>
        <begin position="41"/>
        <end position="61"/>
    </location>
</feature>
<feature type="transmembrane region" description="Helical" evidence="1">
    <location>
        <begin position="81"/>
        <end position="101"/>
    </location>
</feature>
<feature type="transmembrane region" description="Helical" evidence="1">
    <location>
        <begin position="114"/>
        <end position="134"/>
    </location>
</feature>
<feature type="transmembrane region" description="Helical" evidence="1">
    <location>
        <begin position="161"/>
        <end position="181"/>
    </location>
</feature>
<evidence type="ECO:0000255" key="1"/>
<evidence type="ECO:0000305" key="2"/>